<keyword id="KW-0067">ATP-binding</keyword>
<keyword id="KW-0276">Fatty acid metabolism</keyword>
<keyword id="KW-0436">Ligase</keyword>
<keyword id="KW-0443">Lipid metabolism</keyword>
<keyword id="KW-0547">Nucleotide-binding</keyword>
<keyword id="KW-1185">Reference proteome</keyword>
<protein>
    <recommendedName>
        <fullName>Long-chain-fatty-acid--CoA ligase FadD15</fullName>
        <shortName>FACL</shortName>
        <ecNumber evidence="1 2">6.2.1.3</ecNumber>
    </recommendedName>
    <alternativeName>
        <fullName>Acyl-CoA synthetase</fullName>
    </alternativeName>
    <alternativeName>
        <fullName evidence="3">FACL15</fullName>
    </alternativeName>
</protein>
<feature type="chain" id="PRO_0000406784" description="Long-chain-fatty-acid--CoA ligase FadD15">
    <location>
        <begin position="1"/>
        <end position="600"/>
    </location>
</feature>
<comment type="function">
    <text evidence="1 2">Catalyzes the activation of long-chain fatty acids as acyl-coenzyme A (acyl-CoA), which are then transferred to the multifunctional polyketide synthase (PKS) type III for further chain extension.</text>
</comment>
<comment type="catalytic activity">
    <reaction evidence="1 2">
        <text>a long-chain fatty acid + ATP + CoA = a long-chain fatty acyl-CoA + AMP + diphosphate</text>
        <dbReference type="Rhea" id="RHEA:15421"/>
        <dbReference type="ChEBI" id="CHEBI:30616"/>
        <dbReference type="ChEBI" id="CHEBI:33019"/>
        <dbReference type="ChEBI" id="CHEBI:57287"/>
        <dbReference type="ChEBI" id="CHEBI:57560"/>
        <dbReference type="ChEBI" id="CHEBI:83139"/>
        <dbReference type="ChEBI" id="CHEBI:456215"/>
        <dbReference type="EC" id="6.2.1.3"/>
    </reaction>
    <physiologicalReaction direction="left-to-right" evidence="2">
        <dbReference type="Rhea" id="RHEA:15422"/>
    </physiologicalReaction>
</comment>
<comment type="catalytic activity">
    <reaction evidence="2">
        <text>dodecanoate + ATP + CoA = dodecanoyl-CoA + AMP + diphosphate</text>
        <dbReference type="Rhea" id="RHEA:33623"/>
        <dbReference type="ChEBI" id="CHEBI:18262"/>
        <dbReference type="ChEBI" id="CHEBI:30616"/>
        <dbReference type="ChEBI" id="CHEBI:33019"/>
        <dbReference type="ChEBI" id="CHEBI:57287"/>
        <dbReference type="ChEBI" id="CHEBI:57375"/>
        <dbReference type="ChEBI" id="CHEBI:456215"/>
    </reaction>
    <physiologicalReaction direction="left-to-right" evidence="2">
        <dbReference type="Rhea" id="RHEA:33624"/>
    </physiologicalReaction>
</comment>
<comment type="catalytic activity">
    <reaction evidence="2">
        <text>hexadecanoate + ATP + CoA = hexadecanoyl-CoA + AMP + diphosphate</text>
        <dbReference type="Rhea" id="RHEA:30751"/>
        <dbReference type="ChEBI" id="CHEBI:7896"/>
        <dbReference type="ChEBI" id="CHEBI:30616"/>
        <dbReference type="ChEBI" id="CHEBI:33019"/>
        <dbReference type="ChEBI" id="CHEBI:57287"/>
        <dbReference type="ChEBI" id="CHEBI:57379"/>
        <dbReference type="ChEBI" id="CHEBI:456215"/>
    </reaction>
    <physiologicalReaction direction="left-to-right" evidence="2">
        <dbReference type="Rhea" id="RHEA:30752"/>
    </physiologicalReaction>
</comment>
<comment type="pathway">
    <text evidence="4">Lipid metabolism; fatty acid biosynthesis.</text>
</comment>
<comment type="similarity">
    <text evidence="4">Belongs to the ATP-dependent AMP-binding enzyme family.</text>
</comment>
<organism>
    <name type="scientific">Mycobacterium tuberculosis (strain ATCC 25618 / H37Rv)</name>
    <dbReference type="NCBI Taxonomy" id="83332"/>
    <lineage>
        <taxon>Bacteria</taxon>
        <taxon>Bacillati</taxon>
        <taxon>Actinomycetota</taxon>
        <taxon>Actinomycetes</taxon>
        <taxon>Mycobacteriales</taxon>
        <taxon>Mycobacteriaceae</taxon>
        <taxon>Mycobacterium</taxon>
        <taxon>Mycobacterium tuberculosis complex</taxon>
    </lineage>
</organism>
<evidence type="ECO:0000269" key="1">
    <source>
    </source>
</evidence>
<evidence type="ECO:0000269" key="2">
    <source>
    </source>
</evidence>
<evidence type="ECO:0000303" key="3">
    <source>
    </source>
</evidence>
<evidence type="ECO:0000305" key="4"/>
<dbReference type="EC" id="6.2.1.3" evidence="1 2"/>
<dbReference type="EMBL" id="AL123456">
    <property type="protein sequence ID" value="CCP44964.1"/>
    <property type="molecule type" value="Genomic_DNA"/>
</dbReference>
<dbReference type="PIR" id="E70937">
    <property type="entry name" value="E70937"/>
</dbReference>
<dbReference type="RefSeq" id="NP_216703.1">
    <property type="nucleotide sequence ID" value="NC_000962.3"/>
</dbReference>
<dbReference type="RefSeq" id="WP_003906768.1">
    <property type="nucleotide sequence ID" value="NZ_NVQJ01000008.1"/>
</dbReference>
<dbReference type="SMR" id="O53521"/>
<dbReference type="FunCoup" id="O53521">
    <property type="interactions" value="169"/>
</dbReference>
<dbReference type="STRING" id="83332.Rv2187"/>
<dbReference type="SwissLipids" id="SLP:000000981"/>
<dbReference type="PaxDb" id="83332-Rv2187"/>
<dbReference type="DNASU" id="887456"/>
<dbReference type="GeneID" id="887456"/>
<dbReference type="KEGG" id="mtu:Rv2187"/>
<dbReference type="KEGG" id="mtv:RVBD_2187"/>
<dbReference type="TubercuList" id="Rv2187"/>
<dbReference type="eggNOG" id="COG1022">
    <property type="taxonomic scope" value="Bacteria"/>
</dbReference>
<dbReference type="InParanoid" id="O53521"/>
<dbReference type="OrthoDB" id="9803968at2"/>
<dbReference type="PhylomeDB" id="O53521"/>
<dbReference type="UniPathway" id="UPA00094"/>
<dbReference type="Proteomes" id="UP000001584">
    <property type="component" value="Chromosome"/>
</dbReference>
<dbReference type="GO" id="GO:0009274">
    <property type="term" value="C:peptidoglycan-based cell wall"/>
    <property type="evidence" value="ECO:0007005"/>
    <property type="project" value="MTBBASE"/>
</dbReference>
<dbReference type="GO" id="GO:0005886">
    <property type="term" value="C:plasma membrane"/>
    <property type="evidence" value="ECO:0007005"/>
    <property type="project" value="MTBBASE"/>
</dbReference>
<dbReference type="GO" id="GO:0005524">
    <property type="term" value="F:ATP binding"/>
    <property type="evidence" value="ECO:0007669"/>
    <property type="project" value="UniProtKB-KW"/>
</dbReference>
<dbReference type="GO" id="GO:0016405">
    <property type="term" value="F:CoA-ligase activity"/>
    <property type="evidence" value="ECO:0000318"/>
    <property type="project" value="GO_Central"/>
</dbReference>
<dbReference type="GO" id="GO:0004467">
    <property type="term" value="F:long-chain fatty acid-CoA ligase activity"/>
    <property type="evidence" value="ECO:0000314"/>
    <property type="project" value="MTBBASE"/>
</dbReference>
<dbReference type="GO" id="GO:0071766">
    <property type="term" value="P:Actinobacterium-type cell wall biogenesis"/>
    <property type="evidence" value="ECO:0000314"/>
    <property type="project" value="UniProtKB"/>
</dbReference>
<dbReference type="GO" id="GO:0006633">
    <property type="term" value="P:fatty acid biosynthetic process"/>
    <property type="evidence" value="ECO:0007669"/>
    <property type="project" value="UniProtKB-UniPathway"/>
</dbReference>
<dbReference type="GO" id="GO:0008610">
    <property type="term" value="P:lipid biosynthetic process"/>
    <property type="evidence" value="ECO:0000314"/>
    <property type="project" value="UniProtKB"/>
</dbReference>
<dbReference type="GO" id="GO:0001676">
    <property type="term" value="P:long-chain fatty acid metabolic process"/>
    <property type="evidence" value="ECO:0000314"/>
    <property type="project" value="MTBBASE"/>
</dbReference>
<dbReference type="CDD" id="cd05907">
    <property type="entry name" value="VL_LC_FACS_like"/>
    <property type="match status" value="1"/>
</dbReference>
<dbReference type="Gene3D" id="3.30.300.30">
    <property type="match status" value="1"/>
</dbReference>
<dbReference type="Gene3D" id="3.40.50.12780">
    <property type="entry name" value="N-terminal domain of ligase-like"/>
    <property type="match status" value="1"/>
</dbReference>
<dbReference type="InterPro" id="IPR045851">
    <property type="entry name" value="AMP-bd_C_sf"/>
</dbReference>
<dbReference type="InterPro" id="IPR020845">
    <property type="entry name" value="AMP-binding_CS"/>
</dbReference>
<dbReference type="InterPro" id="IPR000873">
    <property type="entry name" value="AMP-dep_synth/lig_dom"/>
</dbReference>
<dbReference type="InterPro" id="IPR042099">
    <property type="entry name" value="ANL_N_sf"/>
</dbReference>
<dbReference type="PANTHER" id="PTHR43272:SF32">
    <property type="entry name" value="AMP-DEPENDENT SYNTHETASE_LIGASE DOMAIN-CONTAINING PROTEIN"/>
    <property type="match status" value="1"/>
</dbReference>
<dbReference type="PANTHER" id="PTHR43272">
    <property type="entry name" value="LONG-CHAIN-FATTY-ACID--COA LIGASE"/>
    <property type="match status" value="1"/>
</dbReference>
<dbReference type="Pfam" id="PF00501">
    <property type="entry name" value="AMP-binding"/>
    <property type="match status" value="1"/>
</dbReference>
<dbReference type="Pfam" id="PF23562">
    <property type="entry name" value="AMP-binding_C_3"/>
    <property type="match status" value="1"/>
</dbReference>
<dbReference type="SUPFAM" id="SSF56801">
    <property type="entry name" value="Acetyl-CoA synthetase-like"/>
    <property type="match status" value="1"/>
</dbReference>
<dbReference type="PROSITE" id="PS00455">
    <property type="entry name" value="AMP_BINDING"/>
    <property type="match status" value="1"/>
</dbReference>
<accession>O53521</accession>
<accession>L0T8V6</accession>
<gene>
    <name type="primary">fadD15</name>
    <name type="ordered locus">Rv2187</name>
</gene>
<proteinExistence type="evidence at protein level"/>
<reference key="1">
    <citation type="journal article" date="1998" name="Nature">
        <title>Deciphering the biology of Mycobacterium tuberculosis from the complete genome sequence.</title>
        <authorList>
            <person name="Cole S.T."/>
            <person name="Brosch R."/>
            <person name="Parkhill J."/>
            <person name="Garnier T."/>
            <person name="Churcher C.M."/>
            <person name="Harris D.E."/>
            <person name="Gordon S.V."/>
            <person name="Eiglmeier K."/>
            <person name="Gas S."/>
            <person name="Barry C.E. III"/>
            <person name="Tekaia F."/>
            <person name="Badcock K."/>
            <person name="Basham D."/>
            <person name="Brown D."/>
            <person name="Chillingworth T."/>
            <person name="Connor R."/>
            <person name="Davies R.M."/>
            <person name="Devlin K."/>
            <person name="Feltwell T."/>
            <person name="Gentles S."/>
            <person name="Hamlin N."/>
            <person name="Holroyd S."/>
            <person name="Hornsby T."/>
            <person name="Jagels K."/>
            <person name="Krogh A."/>
            <person name="McLean J."/>
            <person name="Moule S."/>
            <person name="Murphy L.D."/>
            <person name="Oliver S."/>
            <person name="Osborne J."/>
            <person name="Quail M.A."/>
            <person name="Rajandream M.A."/>
            <person name="Rogers J."/>
            <person name="Rutter S."/>
            <person name="Seeger K."/>
            <person name="Skelton S."/>
            <person name="Squares S."/>
            <person name="Squares R."/>
            <person name="Sulston J.E."/>
            <person name="Taylor K."/>
            <person name="Whitehead S."/>
            <person name="Barrell B.G."/>
        </authorList>
    </citation>
    <scope>NUCLEOTIDE SEQUENCE [LARGE SCALE GENOMIC DNA]</scope>
    <source>
        <strain>ATCC 25618 / H37Rv</strain>
    </source>
</reference>
<reference key="2">
    <citation type="journal article" date="2004" name="Nature">
        <title>Enzymic activation and transfer of fatty acids as acyl-adenylates in mycobacteria.</title>
        <authorList>
            <person name="Trivedi O.A."/>
            <person name="Arora P."/>
            <person name="Sridharan V."/>
            <person name="Tickoo R."/>
            <person name="Mohanty D."/>
            <person name="Gokhale R.S."/>
        </authorList>
    </citation>
    <scope>FUNCTION AS AN ACYL-COA SYNTHETASE</scope>
    <scope>CATALYTIC ACTIVITY</scope>
    <source>
        <strain>ATCC 25618 / H37Rv</strain>
    </source>
</reference>
<reference key="3">
    <citation type="journal article" date="2009" name="Nat. Chem. Biol.">
        <title>Mechanistic and functional insights into fatty acid activation in Mycobacterium tuberculosis.</title>
        <authorList>
            <person name="Arora P."/>
            <person name="Goyal A."/>
            <person name="Natarajan V.T."/>
            <person name="Rajakumara E."/>
            <person name="Verma P."/>
            <person name="Gupta R."/>
            <person name="Yousuf M."/>
            <person name="Trivedi O.A."/>
            <person name="Mohanty D."/>
            <person name="Tyagi A."/>
            <person name="Sankaranarayanan R."/>
            <person name="Gokhale R.S."/>
        </authorList>
    </citation>
    <scope>FUNCTION</scope>
    <scope>CATALYTIC ACTIVITY</scope>
</reference>
<reference key="4">
    <citation type="journal article" date="2011" name="Mol. Cell. Proteomics">
        <title>Proteogenomic analysis of Mycobacterium tuberculosis by high resolution mass spectrometry.</title>
        <authorList>
            <person name="Kelkar D.S."/>
            <person name="Kumar D."/>
            <person name="Kumar P."/>
            <person name="Balakrishnan L."/>
            <person name="Muthusamy B."/>
            <person name="Yadav A.K."/>
            <person name="Shrivastava P."/>
            <person name="Marimuthu A."/>
            <person name="Anand S."/>
            <person name="Sundaram H."/>
            <person name="Kingsbury R."/>
            <person name="Harsha H.C."/>
            <person name="Nair B."/>
            <person name="Prasad T.S."/>
            <person name="Chauhan D.S."/>
            <person name="Katoch K."/>
            <person name="Katoch V.M."/>
            <person name="Kumar P."/>
            <person name="Chaerkady R."/>
            <person name="Ramachandran S."/>
            <person name="Dash D."/>
            <person name="Pandey A."/>
        </authorList>
    </citation>
    <scope>IDENTIFICATION BY MASS SPECTROMETRY [LARGE SCALE ANALYSIS]</scope>
    <source>
        <strain>ATCC 25618 / H37Rv</strain>
    </source>
</reference>
<name>FAC15_MYCTU</name>
<sequence length="600" mass="64035">MREISVPAPFTVGEHDNVAAMVFEHERDDPDYVIYQRLIDGVWTDVTCAEAANQIRAAALGLISLGVQAGDRVVIFSATRYEWAILDFAILAVGAVTVPTYETSSAEQVRWVLQDSEAVVLFAETDSHATMVAELSGSVPALREVLQIAGSGPNALDRLTEAGASVDPAELTARLAALRSTDPATLIYTSGTTGRPKGCQLTQSNLVHEIKGARAYHPTLLRKGERLLVFLPLAHVLARAISMAAFHSKVTVGFTSDIKNLLPMLAVFKPTVVVSVPRVFEKVYNTAEQNAANAGKGRIFAIAAQTAVDWSEACDRGGPGLLLRAKHAVFDRLVYRKLRAALGGNCRAAVSGGAPLGARLGHFYRGAGLTIYEGYGLSGTSGGVAISQFNDLKIGTVGKPVPGNSLRIADDGELLVRGGVVFSGYWRNEQATTEAFTDGWFKTGDLGAVDEDGFLTITGRKKEIIVTAGGKNVAPAVLEDQLRAHPLISQAVVVGDAKPFIGALITIDPEAFEGWKQRNSKTAGASVGDLATDPDLIAEIDAAVKQANLAVSHAESIRKFRILPVDFTEDTGELTPTMKVKRKVVAEKFASDIEAIYNKE</sequence>